<keyword id="KW-0028">Amino-acid biosynthesis</keyword>
<keyword id="KW-0055">Arginine biosynthesis</keyword>
<keyword id="KW-0067">ATP-binding</keyword>
<keyword id="KW-0963">Cytoplasm</keyword>
<keyword id="KW-0418">Kinase</keyword>
<keyword id="KW-0547">Nucleotide-binding</keyword>
<keyword id="KW-1185">Reference proteome</keyword>
<keyword id="KW-0808">Transferase</keyword>
<comment type="function">
    <text evidence="1">Catalyzes the ATP-dependent phosphorylation of N-acetyl-L-glutamate.</text>
</comment>
<comment type="catalytic activity">
    <reaction evidence="1">
        <text>N-acetyl-L-glutamate + ATP = N-acetyl-L-glutamyl 5-phosphate + ADP</text>
        <dbReference type="Rhea" id="RHEA:14629"/>
        <dbReference type="ChEBI" id="CHEBI:30616"/>
        <dbReference type="ChEBI" id="CHEBI:44337"/>
        <dbReference type="ChEBI" id="CHEBI:57936"/>
        <dbReference type="ChEBI" id="CHEBI:456216"/>
        <dbReference type="EC" id="2.7.2.8"/>
    </reaction>
</comment>
<comment type="pathway">
    <text evidence="1">Amino-acid biosynthesis; L-arginine biosynthesis; N(2)-acetyl-L-ornithine from L-glutamate: step 2/4.</text>
</comment>
<comment type="subcellular location">
    <subcellularLocation>
        <location evidence="1">Cytoplasm</location>
    </subcellularLocation>
</comment>
<comment type="similarity">
    <text evidence="1">Belongs to the acetylglutamate kinase family. ArgB subfamily.</text>
</comment>
<gene>
    <name evidence="1" type="primary">argB</name>
    <name type="ordered locus">Lxx06050</name>
</gene>
<feature type="chain" id="PRO_0000112624" description="Acetylglutamate kinase">
    <location>
        <begin position="1"/>
        <end position="302"/>
    </location>
</feature>
<feature type="binding site" evidence="1">
    <location>
        <begin position="75"/>
        <end position="76"/>
    </location>
    <ligand>
        <name>substrate</name>
    </ligand>
</feature>
<feature type="binding site" evidence="1">
    <location>
        <position position="97"/>
    </location>
    <ligand>
        <name>substrate</name>
    </ligand>
</feature>
<feature type="binding site" evidence="1">
    <location>
        <position position="198"/>
    </location>
    <ligand>
        <name>substrate</name>
    </ligand>
</feature>
<feature type="site" description="Transition state stabilizer" evidence="1">
    <location>
        <position position="40"/>
    </location>
</feature>
<feature type="site" description="Transition state stabilizer" evidence="1">
    <location>
        <position position="259"/>
    </location>
</feature>
<reference key="1">
    <citation type="journal article" date="2004" name="Mol. Plant Microbe Interact.">
        <title>The genome sequence of the Gram-positive sugarcane pathogen Leifsonia xyli subsp. xyli.</title>
        <authorList>
            <person name="Monteiro-Vitorello C.B."/>
            <person name="Camargo L.E.A."/>
            <person name="Van Sluys M.A."/>
            <person name="Kitajima J.P."/>
            <person name="Truffi D."/>
            <person name="do Amaral A.M."/>
            <person name="Harakava R."/>
            <person name="de Oliveira J.C.F."/>
            <person name="Wood D."/>
            <person name="de Oliveira M.C."/>
            <person name="Miyaki C.Y."/>
            <person name="Takita M.A."/>
            <person name="da Silva A.C.R."/>
            <person name="Furlan L.R."/>
            <person name="Carraro D.M."/>
            <person name="Camarotte G."/>
            <person name="Almeida N.F. Jr."/>
            <person name="Carrer H."/>
            <person name="Coutinho L.L."/>
            <person name="El-Dorry H.A."/>
            <person name="Ferro M.I.T."/>
            <person name="Gagliardi P.R."/>
            <person name="Giglioti E."/>
            <person name="Goldman M.H.S."/>
            <person name="Goldman G.H."/>
            <person name="Kimura E.T."/>
            <person name="Ferro E.S."/>
            <person name="Kuramae E.E."/>
            <person name="Lemos E.G.M."/>
            <person name="Lemos M.V.F."/>
            <person name="Mauro S.M.Z."/>
            <person name="Machado M.A."/>
            <person name="Marino C.L."/>
            <person name="Menck C.F."/>
            <person name="Nunes L.R."/>
            <person name="Oliveira R.C."/>
            <person name="Pereira G.G."/>
            <person name="Siqueira W."/>
            <person name="de Souza A.A."/>
            <person name="Tsai S.M."/>
            <person name="Zanca A.S."/>
            <person name="Simpson A.J.G."/>
            <person name="Brumbley S.M."/>
            <person name="Setubal J.C."/>
        </authorList>
    </citation>
    <scope>NUCLEOTIDE SEQUENCE [LARGE SCALE GENOMIC DNA]</scope>
    <source>
        <strain>CTCB07</strain>
    </source>
</reference>
<name>ARGB_LEIXX</name>
<sequence length="302" mass="31812">MTTEDTFETAERAAAIAKAAALIESLPWLKTFHDRIIVVKFGGNAMVSEELQRTFAEDMVYLRYAGLLPVIVHGGGPQISAMLDRLGIQSEFRGGYRVTTPEAMEVVRMVLTGQINRDIVAAINKHGPLAAGLSGEDAALFQGRKRGAVVDGEAVDLGLVGDVIGVNPEAVLAQIDAGRIPVVSSIAPDIDEPGQSLNVNADAAAAALAVALRAAKLVILTDVAGLYSDWPNRDSLLSKITARELRELLPGLESGMIPKMAACLAAVDGGVEKAEIIDGRIEHSILLEVFTQSGIGTEVAPV</sequence>
<dbReference type="EC" id="2.7.2.8" evidence="1"/>
<dbReference type="EMBL" id="AE016822">
    <property type="protein sequence ID" value="AAT88564.1"/>
    <property type="molecule type" value="Genomic_DNA"/>
</dbReference>
<dbReference type="RefSeq" id="WP_011185563.1">
    <property type="nucleotide sequence ID" value="NC_006087.1"/>
</dbReference>
<dbReference type="SMR" id="Q6AGD1"/>
<dbReference type="STRING" id="281090.Lxx06050"/>
<dbReference type="KEGG" id="lxx:Lxx06050"/>
<dbReference type="eggNOG" id="COG0548">
    <property type="taxonomic scope" value="Bacteria"/>
</dbReference>
<dbReference type="HOGENOM" id="CLU_053680_0_1_11"/>
<dbReference type="UniPathway" id="UPA00068">
    <property type="reaction ID" value="UER00107"/>
</dbReference>
<dbReference type="Proteomes" id="UP000001306">
    <property type="component" value="Chromosome"/>
</dbReference>
<dbReference type="GO" id="GO:0005737">
    <property type="term" value="C:cytoplasm"/>
    <property type="evidence" value="ECO:0007669"/>
    <property type="project" value="UniProtKB-SubCell"/>
</dbReference>
<dbReference type="GO" id="GO:0003991">
    <property type="term" value="F:acetylglutamate kinase activity"/>
    <property type="evidence" value="ECO:0007669"/>
    <property type="project" value="UniProtKB-UniRule"/>
</dbReference>
<dbReference type="GO" id="GO:0005524">
    <property type="term" value="F:ATP binding"/>
    <property type="evidence" value="ECO:0007669"/>
    <property type="project" value="UniProtKB-UniRule"/>
</dbReference>
<dbReference type="GO" id="GO:0042450">
    <property type="term" value="P:arginine biosynthetic process via ornithine"/>
    <property type="evidence" value="ECO:0007669"/>
    <property type="project" value="UniProtKB-UniRule"/>
</dbReference>
<dbReference type="GO" id="GO:0006526">
    <property type="term" value="P:L-arginine biosynthetic process"/>
    <property type="evidence" value="ECO:0007669"/>
    <property type="project" value="UniProtKB-UniPathway"/>
</dbReference>
<dbReference type="CDD" id="cd04250">
    <property type="entry name" value="AAK_NAGK-C"/>
    <property type="match status" value="1"/>
</dbReference>
<dbReference type="FunFam" id="3.40.1160.10:FF:000004">
    <property type="entry name" value="Acetylglutamate kinase"/>
    <property type="match status" value="1"/>
</dbReference>
<dbReference type="Gene3D" id="3.40.1160.10">
    <property type="entry name" value="Acetylglutamate kinase-like"/>
    <property type="match status" value="1"/>
</dbReference>
<dbReference type="HAMAP" id="MF_00082">
    <property type="entry name" value="ArgB"/>
    <property type="match status" value="1"/>
</dbReference>
<dbReference type="InterPro" id="IPR036393">
    <property type="entry name" value="AceGlu_kinase-like_sf"/>
</dbReference>
<dbReference type="InterPro" id="IPR004662">
    <property type="entry name" value="AcgluKinase_fam"/>
</dbReference>
<dbReference type="InterPro" id="IPR037528">
    <property type="entry name" value="ArgB"/>
</dbReference>
<dbReference type="InterPro" id="IPR001048">
    <property type="entry name" value="Asp/Glu/Uridylate_kinase"/>
</dbReference>
<dbReference type="InterPro" id="IPR001057">
    <property type="entry name" value="Glu/AcGlu_kinase"/>
</dbReference>
<dbReference type="InterPro" id="IPR041727">
    <property type="entry name" value="NAGK-C"/>
</dbReference>
<dbReference type="NCBIfam" id="TIGR00761">
    <property type="entry name" value="argB"/>
    <property type="match status" value="1"/>
</dbReference>
<dbReference type="PANTHER" id="PTHR23342">
    <property type="entry name" value="N-ACETYLGLUTAMATE SYNTHASE"/>
    <property type="match status" value="1"/>
</dbReference>
<dbReference type="PANTHER" id="PTHR23342:SF0">
    <property type="entry name" value="N-ACETYLGLUTAMATE SYNTHASE, MITOCHONDRIAL"/>
    <property type="match status" value="1"/>
</dbReference>
<dbReference type="Pfam" id="PF00696">
    <property type="entry name" value="AA_kinase"/>
    <property type="match status" value="1"/>
</dbReference>
<dbReference type="PIRSF" id="PIRSF000728">
    <property type="entry name" value="NAGK"/>
    <property type="match status" value="1"/>
</dbReference>
<dbReference type="PRINTS" id="PR00474">
    <property type="entry name" value="GLU5KINASE"/>
</dbReference>
<dbReference type="SUPFAM" id="SSF53633">
    <property type="entry name" value="Carbamate kinase-like"/>
    <property type="match status" value="1"/>
</dbReference>
<protein>
    <recommendedName>
        <fullName evidence="1">Acetylglutamate kinase</fullName>
        <ecNumber evidence="1">2.7.2.8</ecNumber>
    </recommendedName>
    <alternativeName>
        <fullName evidence="1">N-acetyl-L-glutamate 5-phosphotransferase</fullName>
    </alternativeName>
    <alternativeName>
        <fullName evidence="1">NAG kinase</fullName>
        <shortName evidence="1">NAGK</shortName>
    </alternativeName>
</protein>
<accession>Q6AGD1</accession>
<organism>
    <name type="scientific">Leifsonia xyli subsp. xyli (strain CTCB07)</name>
    <dbReference type="NCBI Taxonomy" id="281090"/>
    <lineage>
        <taxon>Bacteria</taxon>
        <taxon>Bacillati</taxon>
        <taxon>Actinomycetota</taxon>
        <taxon>Actinomycetes</taxon>
        <taxon>Micrococcales</taxon>
        <taxon>Microbacteriaceae</taxon>
        <taxon>Leifsonia</taxon>
    </lineage>
</organism>
<proteinExistence type="inferred from homology"/>
<evidence type="ECO:0000255" key="1">
    <source>
        <dbReference type="HAMAP-Rule" id="MF_00082"/>
    </source>
</evidence>